<dbReference type="EMBL" id="CP000852">
    <property type="protein sequence ID" value="ABW01729.1"/>
    <property type="molecule type" value="Genomic_DNA"/>
</dbReference>
<dbReference type="RefSeq" id="WP_012185948.1">
    <property type="nucleotide sequence ID" value="NC_009954.1"/>
</dbReference>
<dbReference type="SMR" id="A8MD73"/>
<dbReference type="STRING" id="397948.Cmaq_0895"/>
<dbReference type="GeneID" id="5709626"/>
<dbReference type="KEGG" id="cma:Cmaq_0895"/>
<dbReference type="eggNOG" id="arCOG04277">
    <property type="taxonomic scope" value="Archaea"/>
</dbReference>
<dbReference type="HOGENOM" id="CLU_102600_3_0_2"/>
<dbReference type="OrthoDB" id="23689at2157"/>
<dbReference type="Proteomes" id="UP000001137">
    <property type="component" value="Chromosome"/>
</dbReference>
<dbReference type="GO" id="GO:0005737">
    <property type="term" value="C:cytoplasm"/>
    <property type="evidence" value="ECO:0007669"/>
    <property type="project" value="UniProtKB-SubCell"/>
</dbReference>
<dbReference type="GO" id="GO:0043022">
    <property type="term" value="F:ribosome binding"/>
    <property type="evidence" value="ECO:0007669"/>
    <property type="project" value="InterPro"/>
</dbReference>
<dbReference type="GO" id="GO:0003723">
    <property type="term" value="F:RNA binding"/>
    <property type="evidence" value="ECO:0007669"/>
    <property type="project" value="InterPro"/>
</dbReference>
<dbReference type="GO" id="GO:0003746">
    <property type="term" value="F:translation elongation factor activity"/>
    <property type="evidence" value="ECO:0007669"/>
    <property type="project" value="InterPro"/>
</dbReference>
<dbReference type="GO" id="GO:0003743">
    <property type="term" value="F:translation initiation factor activity"/>
    <property type="evidence" value="ECO:0007669"/>
    <property type="project" value="UniProtKB-UniRule"/>
</dbReference>
<dbReference type="GO" id="GO:0045901">
    <property type="term" value="P:positive regulation of translational elongation"/>
    <property type="evidence" value="ECO:0007669"/>
    <property type="project" value="InterPro"/>
</dbReference>
<dbReference type="GO" id="GO:0045905">
    <property type="term" value="P:positive regulation of translational termination"/>
    <property type="evidence" value="ECO:0007669"/>
    <property type="project" value="InterPro"/>
</dbReference>
<dbReference type="CDD" id="cd04467">
    <property type="entry name" value="S1_aIF5A"/>
    <property type="match status" value="1"/>
</dbReference>
<dbReference type="Gene3D" id="2.30.30.30">
    <property type="match status" value="1"/>
</dbReference>
<dbReference type="Gene3D" id="2.40.50.140">
    <property type="entry name" value="Nucleic acid-binding proteins"/>
    <property type="match status" value="1"/>
</dbReference>
<dbReference type="HAMAP" id="MF_00085">
    <property type="entry name" value="eIF_5A"/>
    <property type="match status" value="1"/>
</dbReference>
<dbReference type="InterPro" id="IPR001884">
    <property type="entry name" value="IF5A-like"/>
</dbReference>
<dbReference type="InterPro" id="IPR048670">
    <property type="entry name" value="IF5A-like_N"/>
</dbReference>
<dbReference type="InterPro" id="IPR012340">
    <property type="entry name" value="NA-bd_OB-fold"/>
</dbReference>
<dbReference type="InterPro" id="IPR014722">
    <property type="entry name" value="Rib_uL2_dom2"/>
</dbReference>
<dbReference type="InterPro" id="IPR019769">
    <property type="entry name" value="Trans_elong_IF5A_hypusine_site"/>
</dbReference>
<dbReference type="InterPro" id="IPR022847">
    <property type="entry name" value="Transl_elong_IF5A_arc"/>
</dbReference>
<dbReference type="InterPro" id="IPR020189">
    <property type="entry name" value="Transl_elong_IF5A_C"/>
</dbReference>
<dbReference type="InterPro" id="IPR008991">
    <property type="entry name" value="Translation_prot_SH3-like_sf"/>
</dbReference>
<dbReference type="NCBIfam" id="TIGR00037">
    <property type="entry name" value="eIF_5A"/>
    <property type="match status" value="1"/>
</dbReference>
<dbReference type="NCBIfam" id="NF003076">
    <property type="entry name" value="PRK03999.1"/>
    <property type="match status" value="1"/>
</dbReference>
<dbReference type="PANTHER" id="PTHR11673">
    <property type="entry name" value="TRANSLATION INITIATION FACTOR 5A FAMILY MEMBER"/>
    <property type="match status" value="1"/>
</dbReference>
<dbReference type="Pfam" id="PF01287">
    <property type="entry name" value="eIF-5a"/>
    <property type="match status" value="1"/>
</dbReference>
<dbReference type="Pfam" id="PF21485">
    <property type="entry name" value="IF5A-like_N"/>
    <property type="match status" value="1"/>
</dbReference>
<dbReference type="PIRSF" id="PIRSF003025">
    <property type="entry name" value="eIF5A"/>
    <property type="match status" value="1"/>
</dbReference>
<dbReference type="SMART" id="SM01376">
    <property type="entry name" value="eIF-5a"/>
    <property type="match status" value="1"/>
</dbReference>
<dbReference type="SUPFAM" id="SSF50249">
    <property type="entry name" value="Nucleic acid-binding proteins"/>
    <property type="match status" value="1"/>
</dbReference>
<dbReference type="SUPFAM" id="SSF50104">
    <property type="entry name" value="Translation proteins SH3-like domain"/>
    <property type="match status" value="1"/>
</dbReference>
<dbReference type="PROSITE" id="PS00302">
    <property type="entry name" value="IF5A_HYPUSINE"/>
    <property type="match status" value="1"/>
</dbReference>
<organism>
    <name type="scientific">Caldivirga maquilingensis (strain ATCC 700844 / DSM 13496 / JCM 10307 / IC-167)</name>
    <dbReference type="NCBI Taxonomy" id="397948"/>
    <lineage>
        <taxon>Archaea</taxon>
        <taxon>Thermoproteota</taxon>
        <taxon>Thermoprotei</taxon>
        <taxon>Thermoproteales</taxon>
        <taxon>Thermoproteaceae</taxon>
        <taxon>Caldivirga</taxon>
    </lineage>
</organism>
<protein>
    <recommendedName>
        <fullName evidence="1">Translation initiation factor 5A</fullName>
    </recommendedName>
    <alternativeName>
        <fullName evidence="1">Hypusine-containing protein</fullName>
    </alternativeName>
    <alternativeName>
        <fullName evidence="1">eIF-5A</fullName>
    </alternativeName>
</protein>
<proteinExistence type="inferred from homology"/>
<gene>
    <name type="primary">eIF5A</name>
    <name type="ordered locus">Cmaq_0895</name>
</gene>
<comment type="function">
    <text evidence="1">Functions by promoting the formation of the first peptide bond.</text>
</comment>
<comment type="subcellular location">
    <subcellularLocation>
        <location evidence="1">Cytoplasm</location>
    </subcellularLocation>
</comment>
<comment type="similarity">
    <text evidence="1">Belongs to the eIF-5A family.</text>
</comment>
<feature type="chain" id="PRO_1000093006" description="Translation initiation factor 5A">
    <location>
        <begin position="1"/>
        <end position="132"/>
    </location>
</feature>
<feature type="modified residue" description="Hypusine" evidence="1">
    <location>
        <position position="36"/>
    </location>
</feature>
<accession>A8MD73</accession>
<keyword id="KW-0963">Cytoplasm</keyword>
<keyword id="KW-0385">Hypusine</keyword>
<keyword id="KW-0396">Initiation factor</keyword>
<keyword id="KW-0648">Protein biosynthesis</keyword>
<keyword id="KW-1185">Reference proteome</keyword>
<sequence>MSTRTASAGDIKEGSYIMIDNMPCRVVEVEKSKTGKHGSAKARIVGIGVIDGVKRTIVVPTDAAVEVPVIEKFTAQVISISGDSVQLMDLRNYQTFEIPSSYIEDEAKGKLEPGVQVEVWDVAGYKKIMRTR</sequence>
<name>IF5A_CALMQ</name>
<reference key="1">
    <citation type="submission" date="2007-10" db="EMBL/GenBank/DDBJ databases">
        <title>Complete sequence of Caldivirga maquilingensis IC-167.</title>
        <authorList>
            <consortium name="US DOE Joint Genome Institute"/>
            <person name="Copeland A."/>
            <person name="Lucas S."/>
            <person name="Lapidus A."/>
            <person name="Barry K."/>
            <person name="Glavina del Rio T."/>
            <person name="Dalin E."/>
            <person name="Tice H."/>
            <person name="Pitluck S."/>
            <person name="Saunders E."/>
            <person name="Brettin T."/>
            <person name="Bruce D."/>
            <person name="Detter J.C."/>
            <person name="Han C."/>
            <person name="Schmutz J."/>
            <person name="Larimer F."/>
            <person name="Land M."/>
            <person name="Hauser L."/>
            <person name="Kyrpides N."/>
            <person name="Ivanova N."/>
            <person name="Biddle J.F."/>
            <person name="Zhang Z."/>
            <person name="Fitz-Gibbon S.T."/>
            <person name="Lowe T.M."/>
            <person name="Saltikov C."/>
            <person name="House C.H."/>
            <person name="Richardson P."/>
        </authorList>
    </citation>
    <scope>NUCLEOTIDE SEQUENCE [LARGE SCALE GENOMIC DNA]</scope>
    <source>
        <strain>ATCC 700844 / DSM 13496 / JCM 10307 / IC-167</strain>
    </source>
</reference>
<evidence type="ECO:0000255" key="1">
    <source>
        <dbReference type="HAMAP-Rule" id="MF_00085"/>
    </source>
</evidence>